<comment type="function">
    <text evidence="1">Omega-conotoxins act at presynaptic membranes, they bind and block voltage-gated calcium channels (Cav). This toxin blocks N-, P- and Q-type calcium channels (By similarity).</text>
</comment>
<comment type="subcellular location">
    <subcellularLocation>
        <location evidence="1">Secreted</location>
    </subcellularLocation>
</comment>
<comment type="tissue specificity">
    <text>Expressed by the venom duct.</text>
</comment>
<comment type="domain">
    <text evidence="1">The presence of a 'disulfide through disulfide knot' structurally defines this protein as a knottin.</text>
</comment>
<comment type="domain">
    <text>The cysteine framework is VI/VII (C-C-CC-C-C).</text>
</comment>
<comment type="similarity">
    <text evidence="4">Belongs to the conotoxin O1 superfamily.</text>
</comment>
<protein>
    <recommendedName>
        <fullName>Omega-conotoxin-like S6.6</fullName>
    </recommendedName>
</protein>
<accession>P0C831</accession>
<sequence length="72" mass="7741">MKLTCVVIVAVLLLTACQLLTADDSRGTQKHRALRSDTKLSMSTRCKGKGAPCRKTMYDCCSGSCGRRGKCG</sequence>
<proteinExistence type="evidence at transcript level"/>
<feature type="signal peptide" evidence="3">
    <location>
        <begin position="1"/>
        <end position="22"/>
    </location>
</feature>
<feature type="propeptide" id="PRO_0000345102" evidence="1">
    <location>
        <begin position="23"/>
        <end position="45"/>
    </location>
</feature>
<feature type="peptide" id="PRO_0000345103" description="Omega-conotoxin-like S6.6">
    <location>
        <begin position="46"/>
        <end position="71"/>
    </location>
</feature>
<feature type="modified residue" description="Cysteine amide" evidence="1">
    <location>
        <position position="71"/>
    </location>
</feature>
<feature type="disulfide bond" evidence="2">
    <location>
        <begin position="46"/>
        <end position="61"/>
    </location>
</feature>
<feature type="disulfide bond" evidence="2">
    <location>
        <begin position="53"/>
        <end position="65"/>
    </location>
</feature>
<feature type="disulfide bond" evidence="2">
    <location>
        <begin position="60"/>
        <end position="71"/>
    </location>
</feature>
<name>O166_CONST</name>
<organism>
    <name type="scientific">Conus striatus</name>
    <name type="common">Striated cone</name>
    <dbReference type="NCBI Taxonomy" id="6493"/>
    <lineage>
        <taxon>Eukaryota</taxon>
        <taxon>Metazoa</taxon>
        <taxon>Spiralia</taxon>
        <taxon>Lophotrochozoa</taxon>
        <taxon>Mollusca</taxon>
        <taxon>Gastropoda</taxon>
        <taxon>Caenogastropoda</taxon>
        <taxon>Neogastropoda</taxon>
        <taxon>Conoidea</taxon>
        <taxon>Conidae</taxon>
        <taxon>Conus</taxon>
        <taxon>Pionoconus</taxon>
    </lineage>
</organism>
<reference key="1">
    <citation type="journal article" date="2006" name="Biochimie">
        <title>Analysis of expressed sequence tags from the venom ducts of Conus striatus: focusing on the expression profile of conotoxins.</title>
        <authorList>
            <person name="Pi C."/>
            <person name="Liu Y."/>
            <person name="Peng C."/>
            <person name="Jiang X."/>
            <person name="Liu J."/>
            <person name="Xu B."/>
            <person name="Yu X."/>
            <person name="Yu Y."/>
            <person name="Jiang X."/>
            <person name="Wang L."/>
            <person name="Dong M."/>
            <person name="Chen S."/>
            <person name="Xu A.-L."/>
        </authorList>
    </citation>
    <scope>NUCLEOTIDE SEQUENCE [MRNA]</scope>
    <source>
        <tissue>Venom duct</tissue>
    </source>
</reference>
<keyword id="KW-0027">Amidation</keyword>
<keyword id="KW-0108">Calcium channel impairing toxin</keyword>
<keyword id="KW-1015">Disulfide bond</keyword>
<keyword id="KW-0872">Ion channel impairing toxin</keyword>
<keyword id="KW-0960">Knottin</keyword>
<keyword id="KW-0528">Neurotoxin</keyword>
<keyword id="KW-0638">Presynaptic neurotoxin</keyword>
<keyword id="KW-0964">Secreted</keyword>
<keyword id="KW-0732">Signal</keyword>
<keyword id="KW-0800">Toxin</keyword>
<keyword id="KW-1218">Voltage-gated calcium channel impairing toxin</keyword>
<evidence type="ECO:0000250" key="1"/>
<evidence type="ECO:0000250" key="2">
    <source>
        <dbReference type="UniProtKB" id="P05484"/>
    </source>
</evidence>
<evidence type="ECO:0000255" key="3"/>
<evidence type="ECO:0000305" key="4"/>
<dbReference type="BMRB" id="P0C831"/>
<dbReference type="SMR" id="P0C831"/>
<dbReference type="ConoServer" id="3543">
    <property type="toxin name" value="S6.6 precursor"/>
</dbReference>
<dbReference type="GO" id="GO:0005576">
    <property type="term" value="C:extracellular region"/>
    <property type="evidence" value="ECO:0007669"/>
    <property type="project" value="UniProtKB-SubCell"/>
</dbReference>
<dbReference type="GO" id="GO:0044231">
    <property type="term" value="C:host cell presynaptic membrane"/>
    <property type="evidence" value="ECO:0007669"/>
    <property type="project" value="UniProtKB-KW"/>
</dbReference>
<dbReference type="GO" id="GO:0005246">
    <property type="term" value="F:calcium channel regulator activity"/>
    <property type="evidence" value="ECO:0007669"/>
    <property type="project" value="UniProtKB-KW"/>
</dbReference>
<dbReference type="GO" id="GO:0008200">
    <property type="term" value="F:ion channel inhibitor activity"/>
    <property type="evidence" value="ECO:0007669"/>
    <property type="project" value="InterPro"/>
</dbReference>
<dbReference type="GO" id="GO:0090729">
    <property type="term" value="F:toxin activity"/>
    <property type="evidence" value="ECO:0007669"/>
    <property type="project" value="UniProtKB-KW"/>
</dbReference>
<dbReference type="InterPro" id="IPR004214">
    <property type="entry name" value="Conotoxin"/>
</dbReference>
<dbReference type="InterPro" id="IPR012321">
    <property type="entry name" value="Conotoxin_omega-typ_CS"/>
</dbReference>
<dbReference type="Pfam" id="PF02950">
    <property type="entry name" value="Conotoxin"/>
    <property type="match status" value="1"/>
</dbReference>
<dbReference type="SUPFAM" id="SSF57059">
    <property type="entry name" value="omega toxin-like"/>
    <property type="match status" value="1"/>
</dbReference>
<dbReference type="PROSITE" id="PS60004">
    <property type="entry name" value="OMEGA_CONOTOXIN"/>
    <property type="match status" value="1"/>
</dbReference>